<reference key="1">
    <citation type="journal article" date="2008" name="PLoS ONE">
        <title>Survival in nuclear waste, extreme resistance, and potential applications gleaned from the genome sequence of Kineococcus radiotolerans SRS30216.</title>
        <authorList>
            <person name="Bagwell C.E."/>
            <person name="Bhat S."/>
            <person name="Hawkins G.M."/>
            <person name="Smith B.W."/>
            <person name="Biswas T."/>
            <person name="Hoover T.R."/>
            <person name="Saunders E."/>
            <person name="Han C.S."/>
            <person name="Tsodikov O.V."/>
            <person name="Shimkets L.J."/>
        </authorList>
    </citation>
    <scope>NUCLEOTIDE SEQUENCE [LARGE SCALE GENOMIC DNA]</scope>
    <source>
        <strain>ATCC BAA-149 / DSM 14245 / SRS30216</strain>
    </source>
</reference>
<proteinExistence type="inferred from homology"/>
<evidence type="ECO:0000255" key="1">
    <source>
        <dbReference type="HAMAP-Rule" id="MF_02106"/>
    </source>
</evidence>
<evidence type="ECO:0000256" key="2">
    <source>
        <dbReference type="SAM" id="MobiDB-lite"/>
    </source>
</evidence>
<protein>
    <recommendedName>
        <fullName evidence="1">Prokaryotic ubiquitin-like protein Pup</fullName>
    </recommendedName>
    <alternativeName>
        <fullName evidence="1">Bacterial ubiquitin-like modifier</fullName>
    </alternativeName>
</protein>
<comment type="function">
    <text evidence="1">Protein modifier that is covalently attached to lysine residues of substrate proteins, thereby targeting them for proteasomal degradation. The tagging system is termed pupylation.</text>
</comment>
<comment type="pathway">
    <text evidence="1">Protein degradation; proteasomal Pup-dependent pathway.</text>
</comment>
<comment type="subunit">
    <text evidence="1">Strongly interacts with the proteasome-associated ATPase ARC through a hydrophobic interface; the interacting region of Pup lies in its C-terminal half. There is one Pup binding site per ARC hexamer ring.</text>
</comment>
<comment type="domain">
    <text evidence="1">The N-terminal unstructured half of Pup provides a signal required to initiate unfolding and degradation by the proteasome but is not needed for pupylation, while the C-terminal helical half of Pup interacts with ARC to target proteins to the proteasome.</text>
</comment>
<comment type="PTM">
    <text evidence="1">Is modified by deamidation of its C-terminal glutamine to glutamate by the deamidase Dop, a prerequisite to the subsequent pupylation process.</text>
</comment>
<comment type="similarity">
    <text evidence="1">Belongs to the prokaryotic ubiquitin-like protein family.</text>
</comment>
<keyword id="KW-0175">Coiled coil</keyword>
<keyword id="KW-1017">Isopeptide bond</keyword>
<keyword id="KW-1185">Reference proteome</keyword>
<keyword id="KW-0833">Ubl conjugation pathway</keyword>
<sequence>MSGHEQQRPSRREEDVEETPVVPAQAGAQAKESDADVDALLDEIDEVLESNSEEFVRGFVQKGGQ</sequence>
<gene>
    <name evidence="1" type="primary">pup</name>
    <name type="ordered locus">Krad_1872</name>
</gene>
<dbReference type="EMBL" id="CP000750">
    <property type="protein sequence ID" value="ABS03358.1"/>
    <property type="molecule type" value="Genomic_DNA"/>
</dbReference>
<dbReference type="RefSeq" id="WP_011981503.1">
    <property type="nucleotide sequence ID" value="NC_009664.2"/>
</dbReference>
<dbReference type="SMR" id="A6W969"/>
<dbReference type="STRING" id="266940.Krad_1872"/>
<dbReference type="KEGG" id="kra:Krad_1872"/>
<dbReference type="HOGENOM" id="CLU_183816_2_0_11"/>
<dbReference type="OrthoDB" id="3254977at2"/>
<dbReference type="UniPathway" id="UPA00997"/>
<dbReference type="Proteomes" id="UP000001116">
    <property type="component" value="Chromosome"/>
</dbReference>
<dbReference type="GO" id="GO:0070628">
    <property type="term" value="F:proteasome binding"/>
    <property type="evidence" value="ECO:0007669"/>
    <property type="project" value="UniProtKB-UniRule"/>
</dbReference>
<dbReference type="GO" id="GO:0031386">
    <property type="term" value="F:protein tag activity"/>
    <property type="evidence" value="ECO:0007669"/>
    <property type="project" value="UniProtKB-UniRule"/>
</dbReference>
<dbReference type="GO" id="GO:0019941">
    <property type="term" value="P:modification-dependent protein catabolic process"/>
    <property type="evidence" value="ECO:0007669"/>
    <property type="project" value="UniProtKB-UniRule"/>
</dbReference>
<dbReference type="GO" id="GO:0010498">
    <property type="term" value="P:proteasomal protein catabolic process"/>
    <property type="evidence" value="ECO:0007669"/>
    <property type="project" value="UniProtKB-UniRule"/>
</dbReference>
<dbReference type="GO" id="GO:0070490">
    <property type="term" value="P:protein pupylation"/>
    <property type="evidence" value="ECO:0007669"/>
    <property type="project" value="UniProtKB-UniRule"/>
</dbReference>
<dbReference type="HAMAP" id="MF_02106">
    <property type="entry name" value="Pup"/>
    <property type="match status" value="1"/>
</dbReference>
<dbReference type="InterPro" id="IPR008515">
    <property type="entry name" value="Ubiquitin-like_Pup"/>
</dbReference>
<dbReference type="NCBIfam" id="TIGR03687">
    <property type="entry name" value="pupylate_cterm"/>
    <property type="match status" value="1"/>
</dbReference>
<dbReference type="Pfam" id="PF05639">
    <property type="entry name" value="Pup"/>
    <property type="match status" value="1"/>
</dbReference>
<organism>
    <name type="scientific">Kineococcus radiotolerans (strain ATCC BAA-149 / DSM 14245 / SRS30216)</name>
    <dbReference type="NCBI Taxonomy" id="266940"/>
    <lineage>
        <taxon>Bacteria</taxon>
        <taxon>Bacillati</taxon>
        <taxon>Actinomycetota</taxon>
        <taxon>Actinomycetes</taxon>
        <taxon>Kineosporiales</taxon>
        <taxon>Kineosporiaceae</taxon>
        <taxon>Kineococcus</taxon>
    </lineage>
</organism>
<name>PUP_KINRD</name>
<feature type="chain" id="PRO_0000390584" description="Prokaryotic ubiquitin-like protein Pup">
    <location>
        <begin position="1"/>
        <end position="65"/>
    </location>
</feature>
<feature type="region of interest" description="Disordered" evidence="2">
    <location>
        <begin position="1"/>
        <end position="35"/>
    </location>
</feature>
<feature type="region of interest" description="ARC ATPase binding" evidence="1">
    <location>
        <begin position="21"/>
        <end position="59"/>
    </location>
</feature>
<feature type="coiled-coil region" evidence="1">
    <location>
        <begin position="26"/>
        <end position="49"/>
    </location>
</feature>
<feature type="compositionally biased region" description="Basic and acidic residues" evidence="2">
    <location>
        <begin position="1"/>
        <end position="14"/>
    </location>
</feature>
<feature type="modified residue" description="Deamidated glutamine" evidence="1">
    <location>
        <position position="65"/>
    </location>
</feature>
<feature type="cross-link" description="Isoglutamyl lysine isopeptide (Gln-Lys) (interchain with K-? in acceptor proteins)" evidence="1">
    <location>
        <position position="65"/>
    </location>
</feature>
<accession>A6W969</accession>